<protein>
    <recommendedName>
        <fullName>Uncharacterized MFS-type transporter C757.11c</fullName>
    </recommendedName>
</protein>
<reference evidence="4" key="1">
    <citation type="journal article" date="2002" name="Nature">
        <title>The genome sequence of Schizosaccharomyces pombe.</title>
        <authorList>
            <person name="Wood V."/>
            <person name="Gwilliam R."/>
            <person name="Rajandream M.A."/>
            <person name="Lyne M.H."/>
            <person name="Lyne R."/>
            <person name="Stewart A."/>
            <person name="Sgouros J.G."/>
            <person name="Peat N."/>
            <person name="Hayles J."/>
            <person name="Baker S.G."/>
            <person name="Basham D."/>
            <person name="Bowman S."/>
            <person name="Brooks K."/>
            <person name="Brown D."/>
            <person name="Brown S."/>
            <person name="Chillingworth T."/>
            <person name="Churcher C.M."/>
            <person name="Collins M."/>
            <person name="Connor R."/>
            <person name="Cronin A."/>
            <person name="Davis P."/>
            <person name="Feltwell T."/>
            <person name="Fraser A."/>
            <person name="Gentles S."/>
            <person name="Goble A."/>
            <person name="Hamlin N."/>
            <person name="Harris D.E."/>
            <person name="Hidalgo J."/>
            <person name="Hodgson G."/>
            <person name="Holroyd S."/>
            <person name="Hornsby T."/>
            <person name="Howarth S."/>
            <person name="Huckle E.J."/>
            <person name="Hunt S."/>
            <person name="Jagels K."/>
            <person name="James K.D."/>
            <person name="Jones L."/>
            <person name="Jones M."/>
            <person name="Leather S."/>
            <person name="McDonald S."/>
            <person name="McLean J."/>
            <person name="Mooney P."/>
            <person name="Moule S."/>
            <person name="Mungall K.L."/>
            <person name="Murphy L.D."/>
            <person name="Niblett D."/>
            <person name="Odell C."/>
            <person name="Oliver K."/>
            <person name="O'Neil S."/>
            <person name="Pearson D."/>
            <person name="Quail M.A."/>
            <person name="Rabbinowitsch E."/>
            <person name="Rutherford K.M."/>
            <person name="Rutter S."/>
            <person name="Saunders D."/>
            <person name="Seeger K."/>
            <person name="Sharp S."/>
            <person name="Skelton J."/>
            <person name="Simmonds M.N."/>
            <person name="Squares R."/>
            <person name="Squares S."/>
            <person name="Stevens K."/>
            <person name="Taylor K."/>
            <person name="Taylor R.G."/>
            <person name="Tivey A."/>
            <person name="Walsh S.V."/>
            <person name="Warren T."/>
            <person name="Whitehead S."/>
            <person name="Woodward J.R."/>
            <person name="Volckaert G."/>
            <person name="Aert R."/>
            <person name="Robben J."/>
            <person name="Grymonprez B."/>
            <person name="Weltjens I."/>
            <person name="Vanstreels E."/>
            <person name="Rieger M."/>
            <person name="Schaefer M."/>
            <person name="Mueller-Auer S."/>
            <person name="Gabel C."/>
            <person name="Fuchs M."/>
            <person name="Duesterhoeft A."/>
            <person name="Fritzc C."/>
            <person name="Holzer E."/>
            <person name="Moestl D."/>
            <person name="Hilbert H."/>
            <person name="Borzym K."/>
            <person name="Langer I."/>
            <person name="Beck A."/>
            <person name="Lehrach H."/>
            <person name="Reinhardt R."/>
            <person name="Pohl T.M."/>
            <person name="Eger P."/>
            <person name="Zimmermann W."/>
            <person name="Wedler H."/>
            <person name="Wambutt R."/>
            <person name="Purnelle B."/>
            <person name="Goffeau A."/>
            <person name="Cadieu E."/>
            <person name="Dreano S."/>
            <person name="Gloux S."/>
            <person name="Lelaure V."/>
            <person name="Mottier S."/>
            <person name="Galibert F."/>
            <person name="Aves S.J."/>
            <person name="Xiang Z."/>
            <person name="Hunt C."/>
            <person name="Moore K."/>
            <person name="Hurst S.M."/>
            <person name="Lucas M."/>
            <person name="Rochet M."/>
            <person name="Gaillardin C."/>
            <person name="Tallada V.A."/>
            <person name="Garzon A."/>
            <person name="Thode G."/>
            <person name="Daga R.R."/>
            <person name="Cruzado L."/>
            <person name="Jimenez J."/>
            <person name="Sanchez M."/>
            <person name="del Rey F."/>
            <person name="Benito J."/>
            <person name="Dominguez A."/>
            <person name="Revuelta J.L."/>
            <person name="Moreno S."/>
            <person name="Armstrong J."/>
            <person name="Forsburg S.L."/>
            <person name="Cerutti L."/>
            <person name="Lowe T."/>
            <person name="McCombie W.R."/>
            <person name="Paulsen I."/>
            <person name="Potashkin J."/>
            <person name="Shpakovski G.V."/>
            <person name="Ussery D."/>
            <person name="Barrell B.G."/>
            <person name="Nurse P."/>
        </authorList>
    </citation>
    <scope>NUCLEOTIDE SEQUENCE [LARGE SCALE GENOMIC DNA]</scope>
    <source>
        <strain>972 / ATCC 24843</strain>
    </source>
</reference>
<reference evidence="3" key="2">
    <citation type="journal article" date="2006" name="Nat. Biotechnol.">
        <title>ORFeome cloning and global analysis of protein localization in the fission yeast Schizosaccharomyces pombe.</title>
        <authorList>
            <person name="Matsuyama A."/>
            <person name="Arai R."/>
            <person name="Yashiroda Y."/>
            <person name="Shirai A."/>
            <person name="Kamata A."/>
            <person name="Sekido S."/>
            <person name="Kobayashi Y."/>
            <person name="Hashimoto A."/>
            <person name="Hamamoto M."/>
            <person name="Hiraoka Y."/>
            <person name="Horinouchi S."/>
            <person name="Yoshida M."/>
        </authorList>
    </citation>
    <scope>SUBCELLULAR LOCATION [LARGE SCALE ANALYSIS]</scope>
</reference>
<gene>
    <name type="ORF">SPCC757.11c</name>
</gene>
<proteinExistence type="inferred from homology"/>
<name>YJ7B_SCHPO</name>
<comment type="subcellular location">
    <subcellularLocation>
        <location evidence="2">Golgi apparatus</location>
    </subcellularLocation>
    <subcellularLocation>
        <location evidence="1">Membrane</location>
        <topology evidence="1">Multi-pass membrane protein</topology>
    </subcellularLocation>
    <text evidence="1 2">Barrier septum. Cell tip.</text>
</comment>
<comment type="similarity">
    <text evidence="1">Belongs to the major facilitator superfamily.</text>
</comment>
<sequence>MEQQSNLEKDLSVSSFLDEKEKSGYKQSVRLVSNDPSASPAATHKPPFISAALMLLNNTILCISFTIVVPTSERFVQHLGGGNGLSGVIIGLPTITALVLLYPMLRFSTPKAAKGYTIYRRPYTMSCISCIIGHIMYALADKAKSVALILVSRIFTGVACTMFLYHKRYFTDKALISIKYRTSMGVVNSVMATLGLTAGPFIGGLMAKSSMKSQSDIWNEYTSGNWLMAFIWVGLFLFGFACFREVLSPQTDVKEEVVEEKHVINDVKQDTNSKLGFVGCLVIFVVAFSGFSAYFLLNAYQASVPIYTSMLYNYSSFQAGNFLSLAGIINVPLLLIFSYLTRYLTDRDIILLGCCLNIVCMVIHITIHYTGKEFVQPYFIIYTLVFFGSSIANSPSVSLLTKVLHPKYHLIGNVAVQISISLSDTVGAIFGGAFRSFSPVVFFAVCLILNVMSVLALLIIWKKLKVKLRLA</sequence>
<accession>O74921</accession>
<organism>
    <name type="scientific">Schizosaccharomyces pombe (strain 972 / ATCC 24843)</name>
    <name type="common">Fission yeast</name>
    <dbReference type="NCBI Taxonomy" id="284812"/>
    <lineage>
        <taxon>Eukaryota</taxon>
        <taxon>Fungi</taxon>
        <taxon>Dikarya</taxon>
        <taxon>Ascomycota</taxon>
        <taxon>Taphrinomycotina</taxon>
        <taxon>Schizosaccharomycetes</taxon>
        <taxon>Schizosaccharomycetales</taxon>
        <taxon>Schizosaccharomycetaceae</taxon>
        <taxon>Schizosaccharomyces</taxon>
    </lineage>
</organism>
<evidence type="ECO:0000255" key="1"/>
<evidence type="ECO:0000269" key="2">
    <source>
    </source>
</evidence>
<evidence type="ECO:0000305" key="3"/>
<evidence type="ECO:0000312" key="4">
    <source>
        <dbReference type="EMBL" id="CAA21236.1"/>
    </source>
</evidence>
<keyword id="KW-0333">Golgi apparatus</keyword>
<keyword id="KW-0472">Membrane</keyword>
<keyword id="KW-1185">Reference proteome</keyword>
<keyword id="KW-0812">Transmembrane</keyword>
<keyword id="KW-1133">Transmembrane helix</keyword>
<keyword id="KW-0813">Transport</keyword>
<feature type="chain" id="PRO_0000372715" description="Uncharacterized MFS-type transporter C757.11c">
    <location>
        <begin position="1"/>
        <end position="471"/>
    </location>
</feature>
<feature type="transmembrane region" description="Helical" evidence="1">
    <location>
        <begin position="48"/>
        <end position="68"/>
    </location>
</feature>
<feature type="transmembrane region" description="Helical" evidence="1">
    <location>
        <begin position="85"/>
        <end position="105"/>
    </location>
</feature>
<feature type="transmembrane region" description="Helical" evidence="1">
    <location>
        <begin position="123"/>
        <end position="140"/>
    </location>
</feature>
<feature type="transmembrane region" description="Helical" evidence="1">
    <location>
        <begin position="145"/>
        <end position="165"/>
    </location>
</feature>
<feature type="transmembrane region" description="Helical" evidence="1">
    <location>
        <begin position="186"/>
        <end position="206"/>
    </location>
</feature>
<feature type="transmembrane region" description="Helical" evidence="1">
    <location>
        <begin position="223"/>
        <end position="243"/>
    </location>
</feature>
<feature type="transmembrane region" description="Helical" evidence="1">
    <location>
        <begin position="277"/>
        <end position="297"/>
    </location>
</feature>
<feature type="transmembrane region" description="Helical" evidence="1">
    <location>
        <begin position="320"/>
        <end position="340"/>
    </location>
</feature>
<feature type="transmembrane region" description="Helical" evidence="1">
    <location>
        <begin position="349"/>
        <end position="369"/>
    </location>
</feature>
<feature type="transmembrane region" description="Helical" evidence="1">
    <location>
        <begin position="379"/>
        <end position="399"/>
    </location>
</feature>
<feature type="transmembrane region" description="Helical" evidence="1">
    <location>
        <begin position="414"/>
        <end position="434"/>
    </location>
</feature>
<feature type="transmembrane region" description="Helical" evidence="1">
    <location>
        <begin position="440"/>
        <end position="460"/>
    </location>
</feature>
<dbReference type="EMBL" id="CU329672">
    <property type="protein sequence ID" value="CAA21236.1"/>
    <property type="molecule type" value="Genomic_DNA"/>
</dbReference>
<dbReference type="PIR" id="T41602">
    <property type="entry name" value="T41602"/>
</dbReference>
<dbReference type="RefSeq" id="NP_587686.1">
    <property type="nucleotide sequence ID" value="NM_001022681.2"/>
</dbReference>
<dbReference type="BioGRID" id="275384">
    <property type="interactions" value="2"/>
</dbReference>
<dbReference type="FunCoup" id="O74921">
    <property type="interactions" value="65"/>
</dbReference>
<dbReference type="iPTMnet" id="O74921"/>
<dbReference type="PaxDb" id="4896-SPCC757.11c.1"/>
<dbReference type="EnsemblFungi" id="SPCC757.11c.1">
    <property type="protein sequence ID" value="SPCC757.11c.1:pep"/>
    <property type="gene ID" value="SPCC757.11c"/>
</dbReference>
<dbReference type="KEGG" id="spo:2538803"/>
<dbReference type="PomBase" id="SPCC757.11c"/>
<dbReference type="VEuPathDB" id="FungiDB:SPCC757.11c"/>
<dbReference type="eggNOG" id="KOG2325">
    <property type="taxonomic scope" value="Eukaryota"/>
</dbReference>
<dbReference type="HOGENOM" id="CLU_042172_0_0_1"/>
<dbReference type="InParanoid" id="O74921"/>
<dbReference type="OMA" id="LACLIDI"/>
<dbReference type="PhylomeDB" id="O74921"/>
<dbReference type="PRO" id="PR:O74921"/>
<dbReference type="Proteomes" id="UP000002485">
    <property type="component" value="Chromosome III"/>
</dbReference>
<dbReference type="GO" id="GO:0032153">
    <property type="term" value="C:cell division site"/>
    <property type="evidence" value="ECO:0007005"/>
    <property type="project" value="PomBase"/>
</dbReference>
<dbReference type="GO" id="GO:0051286">
    <property type="term" value="C:cell tip"/>
    <property type="evidence" value="ECO:0007005"/>
    <property type="project" value="PomBase"/>
</dbReference>
<dbReference type="GO" id="GO:0005794">
    <property type="term" value="C:Golgi apparatus"/>
    <property type="evidence" value="ECO:0007005"/>
    <property type="project" value="PomBase"/>
</dbReference>
<dbReference type="GO" id="GO:0016020">
    <property type="term" value="C:membrane"/>
    <property type="evidence" value="ECO:0000318"/>
    <property type="project" value="GO_Central"/>
</dbReference>
<dbReference type="GO" id="GO:0022857">
    <property type="term" value="F:transmembrane transporter activity"/>
    <property type="evidence" value="ECO:0000318"/>
    <property type="project" value="GO_Central"/>
</dbReference>
<dbReference type="GO" id="GO:0055085">
    <property type="term" value="P:transmembrane transport"/>
    <property type="evidence" value="ECO:0000255"/>
    <property type="project" value="PomBase"/>
</dbReference>
<dbReference type="CDD" id="cd17326">
    <property type="entry name" value="MFS_MFSD8"/>
    <property type="match status" value="1"/>
</dbReference>
<dbReference type="Gene3D" id="1.20.1250.20">
    <property type="entry name" value="MFS general substrate transporter like domains"/>
    <property type="match status" value="1"/>
</dbReference>
<dbReference type="InterPro" id="IPR011701">
    <property type="entry name" value="MFS"/>
</dbReference>
<dbReference type="InterPro" id="IPR051068">
    <property type="entry name" value="MFS_Domain-Containing_Protein"/>
</dbReference>
<dbReference type="InterPro" id="IPR036259">
    <property type="entry name" value="MFS_trans_sf"/>
</dbReference>
<dbReference type="PANTHER" id="PTHR23510">
    <property type="entry name" value="INNER MEMBRANE TRANSPORT PROTEIN YAJR"/>
    <property type="match status" value="1"/>
</dbReference>
<dbReference type="PANTHER" id="PTHR23510:SF64">
    <property type="entry name" value="INNER MEMBRANE TRANSPORT PROTEIN YAJR"/>
    <property type="match status" value="1"/>
</dbReference>
<dbReference type="Pfam" id="PF07690">
    <property type="entry name" value="MFS_1"/>
    <property type="match status" value="1"/>
</dbReference>
<dbReference type="SUPFAM" id="SSF103473">
    <property type="entry name" value="MFS general substrate transporter"/>
    <property type="match status" value="1"/>
</dbReference>